<keyword id="KW-0025">Alternative splicing</keyword>
<keyword id="KW-0963">Cytoplasm</keyword>
<keyword id="KW-0342">GTP-binding</keyword>
<keyword id="KW-0449">Lipoprotein</keyword>
<keyword id="KW-0472">Membrane</keyword>
<keyword id="KW-0488">Methylation</keyword>
<keyword id="KW-0547">Nucleotide-binding</keyword>
<keyword id="KW-0636">Prenylation</keyword>
<keyword id="KW-1185">Reference proteome</keyword>
<sequence length="197" mass="21591">MSASRFIKCVTVGDGAVGKTCMLISYTSNTFPTDYVPTVFDNFSANVVVDGSTVNLGLWDTAGQEDYNRLRPLSYRGADVFLLAFSLISKASYENVSKKWIPELRHYAPGVPIILVGTKLDLRDDKQFFVDHPGAVPISTAQGEELRKLIGAAAYIECSSKTQQNIKAVFDAAIKVVLQPPKQKKKKKKAQKGCAIL</sequence>
<dbReference type="EMBL" id="AF218381">
    <property type="protein sequence ID" value="AAF28764.1"/>
    <property type="molecule type" value="mRNA"/>
</dbReference>
<dbReference type="EMBL" id="AF329814">
    <property type="protein sequence ID" value="AAK27450.1"/>
    <property type="molecule type" value="Genomic_DNA"/>
</dbReference>
<dbReference type="EMBL" id="AP005290">
    <property type="protein sequence ID" value="BAD28462.1"/>
    <property type="molecule type" value="Genomic_DNA"/>
</dbReference>
<dbReference type="EMBL" id="AP005290">
    <property type="protein sequence ID" value="BAD28463.1"/>
    <property type="molecule type" value="Genomic_DNA"/>
</dbReference>
<dbReference type="EMBL" id="AP006187">
    <property type="protein sequence ID" value="BAD29588.1"/>
    <property type="molecule type" value="Genomic_DNA"/>
</dbReference>
<dbReference type="EMBL" id="AP006187">
    <property type="protein sequence ID" value="BAD29589.1"/>
    <property type="molecule type" value="Genomic_DNA"/>
</dbReference>
<dbReference type="EMBL" id="AP014958">
    <property type="protein sequence ID" value="BAS81793.1"/>
    <property type="molecule type" value="Genomic_DNA"/>
</dbReference>
<dbReference type="EMBL" id="AP014958">
    <property type="protein sequence ID" value="BAS81794.1"/>
    <property type="molecule type" value="Genomic_DNA"/>
</dbReference>
<dbReference type="EMBL" id="CM000139">
    <property type="protein sequence ID" value="EEE58123.1"/>
    <property type="molecule type" value="Genomic_DNA"/>
</dbReference>
<dbReference type="EMBL" id="AK067504">
    <property type="protein sequence ID" value="BAG90452.1"/>
    <property type="molecule type" value="mRNA"/>
</dbReference>
<dbReference type="EMBL" id="AK067796">
    <property type="status" value="NOT_ANNOTATED_CDS"/>
    <property type="molecule type" value="mRNA"/>
</dbReference>
<dbReference type="EMBL" id="AB036062">
    <property type="protein sequence ID" value="BAA88573.1"/>
    <property type="molecule type" value="mRNA"/>
</dbReference>
<dbReference type="RefSeq" id="XP_015627011.1">
    <property type="nucleotide sequence ID" value="XM_015771525.1"/>
</dbReference>
<dbReference type="SMR" id="Q6EP31"/>
<dbReference type="FunCoup" id="Q6EP31">
    <property type="interactions" value="2121"/>
</dbReference>
<dbReference type="STRING" id="39947.Q6EP31"/>
<dbReference type="PaxDb" id="39947-Q6EP31"/>
<dbReference type="EnsemblPlants" id="Os02t0834000-01">
    <molecule id="Q6EP31-1"/>
    <property type="protein sequence ID" value="Os02t0834000-01"/>
    <property type="gene ID" value="Os02g0834000"/>
</dbReference>
<dbReference type="Gramene" id="Os02t0834000-01">
    <molecule id="Q6EP31-1"/>
    <property type="protein sequence ID" value="Os02t0834000-01"/>
    <property type="gene ID" value="Os02g0834000"/>
</dbReference>
<dbReference type="eggNOG" id="KOG0393">
    <property type="taxonomic scope" value="Eukaryota"/>
</dbReference>
<dbReference type="HOGENOM" id="CLU_041217_21_3_1"/>
<dbReference type="InParanoid" id="Q6EP31"/>
<dbReference type="OMA" id="GDEPYTF"/>
<dbReference type="OrthoDB" id="8830751at2759"/>
<dbReference type="PlantReactome" id="R-OSA-5608118">
    <property type="pathway name" value="Auxin signalling"/>
</dbReference>
<dbReference type="Proteomes" id="UP000000763">
    <property type="component" value="Chromosome 2"/>
</dbReference>
<dbReference type="Proteomes" id="UP000007752">
    <property type="component" value="Chromosome 2"/>
</dbReference>
<dbReference type="Proteomes" id="UP000059680">
    <property type="component" value="Chromosome 2"/>
</dbReference>
<dbReference type="ExpressionAtlas" id="Q6EP31">
    <property type="expression patterns" value="baseline and differential"/>
</dbReference>
<dbReference type="GO" id="GO:0042995">
    <property type="term" value="C:cell projection"/>
    <property type="evidence" value="ECO:0000318"/>
    <property type="project" value="GO_Central"/>
</dbReference>
<dbReference type="GO" id="GO:0031410">
    <property type="term" value="C:cytoplasmic vesicle"/>
    <property type="evidence" value="ECO:0000318"/>
    <property type="project" value="GO_Central"/>
</dbReference>
<dbReference type="GO" id="GO:0005856">
    <property type="term" value="C:cytoskeleton"/>
    <property type="evidence" value="ECO:0000318"/>
    <property type="project" value="GO_Central"/>
</dbReference>
<dbReference type="GO" id="GO:0005886">
    <property type="term" value="C:plasma membrane"/>
    <property type="evidence" value="ECO:0000318"/>
    <property type="project" value="GO_Central"/>
</dbReference>
<dbReference type="GO" id="GO:0030427">
    <property type="term" value="C:site of polarized growth"/>
    <property type="evidence" value="ECO:0007669"/>
    <property type="project" value="EnsemblPlants"/>
</dbReference>
<dbReference type="GO" id="GO:0019003">
    <property type="term" value="F:GDP binding"/>
    <property type="evidence" value="ECO:0007669"/>
    <property type="project" value="EnsemblPlants"/>
</dbReference>
<dbReference type="GO" id="GO:0005525">
    <property type="term" value="F:GTP binding"/>
    <property type="evidence" value="ECO:0000318"/>
    <property type="project" value="GO_Central"/>
</dbReference>
<dbReference type="GO" id="GO:0003924">
    <property type="term" value="F:GTPase activity"/>
    <property type="evidence" value="ECO:0000318"/>
    <property type="project" value="GO_Central"/>
</dbReference>
<dbReference type="GO" id="GO:0019901">
    <property type="term" value="F:protein kinase binding"/>
    <property type="evidence" value="ECO:0000318"/>
    <property type="project" value="GO_Central"/>
</dbReference>
<dbReference type="GO" id="GO:0007015">
    <property type="term" value="P:actin filament organization"/>
    <property type="evidence" value="ECO:0000318"/>
    <property type="project" value="GO_Central"/>
</dbReference>
<dbReference type="GO" id="GO:0051211">
    <property type="term" value="P:anisotropic cell growth"/>
    <property type="evidence" value="ECO:0007669"/>
    <property type="project" value="EnsemblPlants"/>
</dbReference>
<dbReference type="GO" id="GO:0030865">
    <property type="term" value="P:cortical cytoskeleton organization"/>
    <property type="evidence" value="ECO:0000318"/>
    <property type="project" value="GO_Central"/>
</dbReference>
<dbReference type="GO" id="GO:0043622">
    <property type="term" value="P:cortical microtubule organization"/>
    <property type="evidence" value="ECO:0007669"/>
    <property type="project" value="EnsemblPlants"/>
</dbReference>
<dbReference type="GO" id="GO:0007163">
    <property type="term" value="P:establishment or maintenance of cell polarity"/>
    <property type="evidence" value="ECO:0000318"/>
    <property type="project" value="GO_Central"/>
</dbReference>
<dbReference type="GO" id="GO:0048446">
    <property type="term" value="P:petal morphogenesis"/>
    <property type="evidence" value="ECO:0007669"/>
    <property type="project" value="EnsemblPlants"/>
</dbReference>
<dbReference type="GO" id="GO:0009958">
    <property type="term" value="P:positive gravitropism"/>
    <property type="evidence" value="ECO:0007669"/>
    <property type="project" value="EnsemblPlants"/>
</dbReference>
<dbReference type="GO" id="GO:0032956">
    <property type="term" value="P:regulation of actin cytoskeleton organization"/>
    <property type="evidence" value="ECO:0000318"/>
    <property type="project" value="GO_Central"/>
</dbReference>
<dbReference type="GO" id="GO:0010928">
    <property type="term" value="P:regulation of auxin mediated signaling pathway"/>
    <property type="evidence" value="ECO:0007669"/>
    <property type="project" value="EnsemblPlants"/>
</dbReference>
<dbReference type="GO" id="GO:0008360">
    <property type="term" value="P:regulation of cell shape"/>
    <property type="evidence" value="ECO:0000318"/>
    <property type="project" value="GO_Central"/>
</dbReference>
<dbReference type="GO" id="GO:0048767">
    <property type="term" value="P:root hair elongation"/>
    <property type="evidence" value="ECO:0007669"/>
    <property type="project" value="EnsemblPlants"/>
</dbReference>
<dbReference type="GO" id="GO:0048766">
    <property type="term" value="P:root hair initiation"/>
    <property type="evidence" value="ECO:0007669"/>
    <property type="project" value="EnsemblPlants"/>
</dbReference>
<dbReference type="GO" id="GO:0007165">
    <property type="term" value="P:signal transduction"/>
    <property type="evidence" value="ECO:0000318"/>
    <property type="project" value="GO_Central"/>
</dbReference>
<dbReference type="GO" id="GO:0007264">
    <property type="term" value="P:small GTPase-mediated signal transduction"/>
    <property type="evidence" value="ECO:0007669"/>
    <property type="project" value="InterPro"/>
</dbReference>
<dbReference type="CDD" id="cd04133">
    <property type="entry name" value="Rop_like"/>
    <property type="match status" value="1"/>
</dbReference>
<dbReference type="FunFam" id="3.40.50.300:FF:000535">
    <property type="entry name" value="rac-like GTP-binding protein RAC2"/>
    <property type="match status" value="1"/>
</dbReference>
<dbReference type="Gene3D" id="3.40.50.300">
    <property type="entry name" value="P-loop containing nucleotide triphosphate hydrolases"/>
    <property type="match status" value="1"/>
</dbReference>
<dbReference type="InterPro" id="IPR027417">
    <property type="entry name" value="P-loop_NTPase"/>
</dbReference>
<dbReference type="InterPro" id="IPR005225">
    <property type="entry name" value="Small_GTP-bd"/>
</dbReference>
<dbReference type="InterPro" id="IPR001806">
    <property type="entry name" value="Small_GTPase"/>
</dbReference>
<dbReference type="InterPro" id="IPR003578">
    <property type="entry name" value="Small_GTPase_Rho"/>
</dbReference>
<dbReference type="NCBIfam" id="TIGR00231">
    <property type="entry name" value="small_GTP"/>
    <property type="match status" value="1"/>
</dbReference>
<dbReference type="PANTHER" id="PTHR24072">
    <property type="entry name" value="RHO FAMILY GTPASE"/>
    <property type="match status" value="1"/>
</dbReference>
<dbReference type="Pfam" id="PF00071">
    <property type="entry name" value="Ras"/>
    <property type="match status" value="1"/>
</dbReference>
<dbReference type="PRINTS" id="PR00449">
    <property type="entry name" value="RASTRNSFRMNG"/>
</dbReference>
<dbReference type="SMART" id="SM00175">
    <property type="entry name" value="RAB"/>
    <property type="match status" value="1"/>
</dbReference>
<dbReference type="SMART" id="SM00173">
    <property type="entry name" value="RAS"/>
    <property type="match status" value="1"/>
</dbReference>
<dbReference type="SMART" id="SM00174">
    <property type="entry name" value="RHO"/>
    <property type="match status" value="1"/>
</dbReference>
<dbReference type="SUPFAM" id="SSF52540">
    <property type="entry name" value="P-loop containing nucleoside triphosphate hydrolases"/>
    <property type="match status" value="1"/>
</dbReference>
<dbReference type="PROSITE" id="PS51420">
    <property type="entry name" value="RHO"/>
    <property type="match status" value="1"/>
</dbReference>
<protein>
    <recommendedName>
        <fullName>Rac-like GTP-binding protein 5</fullName>
    </recommendedName>
    <alternativeName>
        <fullName>GTPase protein RacD</fullName>
    </alternativeName>
    <alternativeName>
        <fullName>OsRac5</fullName>
    </alternativeName>
</protein>
<feature type="chain" id="PRO_0000227574" description="Rac-like GTP-binding protein 5">
    <location>
        <begin position="1"/>
        <end position="194"/>
    </location>
</feature>
<feature type="propeptide" id="PRO_0000227575" description="Removed in mature form" evidence="2">
    <location>
        <begin position="195"/>
        <end position="197"/>
    </location>
</feature>
<feature type="short sequence motif" description="Effector region" evidence="2">
    <location>
        <begin position="35"/>
        <end position="43"/>
    </location>
</feature>
<feature type="binding site" evidence="1">
    <location>
        <begin position="13"/>
        <end position="20"/>
    </location>
    <ligand>
        <name>GTP</name>
        <dbReference type="ChEBI" id="CHEBI:37565"/>
    </ligand>
</feature>
<feature type="binding site" evidence="1">
    <location>
        <begin position="60"/>
        <end position="64"/>
    </location>
    <ligand>
        <name>GTP</name>
        <dbReference type="ChEBI" id="CHEBI:37565"/>
    </ligand>
</feature>
<feature type="binding site" evidence="1">
    <location>
        <begin position="118"/>
        <end position="121"/>
    </location>
    <ligand>
        <name>GTP</name>
        <dbReference type="ChEBI" id="CHEBI:37565"/>
    </ligand>
</feature>
<feature type="modified residue" description="Cysteine methyl ester" evidence="2">
    <location>
        <position position="194"/>
    </location>
</feature>
<feature type="lipid moiety-binding region" description="S-geranylgeranyl cysteine" evidence="2">
    <location>
        <position position="194"/>
    </location>
</feature>
<feature type="splice variant" id="VSP_017559" description="In isoform 2." evidence="3">
    <location>
        <begin position="63"/>
        <end position="64"/>
    </location>
</feature>
<comment type="function">
    <text evidence="1">Inactive GDP-bound Rho GTPases reside in the cytosol, are found in a complex with Rho GDP-dissociation inhibitors (Rho GDIs), and are released from the GDI protein in order to translocate to membranes upon activation.</text>
</comment>
<comment type="subcellular location">
    <subcellularLocation>
        <location evidence="1">Cytoplasm</location>
    </subcellularLocation>
    <subcellularLocation>
        <location evidence="1">Membrane</location>
        <topology evidence="1">Peripheral membrane protein</topology>
    </subcellularLocation>
    <text>Associated with the membrane when activated.</text>
</comment>
<comment type="alternative products">
    <event type="alternative splicing"/>
    <isoform>
        <id>Q6EP31-1</id>
        <name>1</name>
        <sequence type="displayed"/>
    </isoform>
    <isoform>
        <id>Q6EP31-2</id>
        <name>2</name>
        <sequence type="described" ref="VSP_017559"/>
    </isoform>
</comment>
<comment type="similarity">
    <text evidence="4">Belongs to the small GTPase superfamily. Rho family.</text>
</comment>
<gene>
    <name type="primary">RAC5</name>
    <name type="synonym">RACD</name>
    <name type="ordered locus">Os02g0834000</name>
    <name type="ordered locus">LOC_Os02g58730</name>
    <name type="ORF">OJ1282_E10.23-1</name>
    <name type="ORF">OJ1282_E10.23-2</name>
    <name evidence="5" type="ORF">OsJ_09018</name>
    <name type="ORF">P0264G11.2-1</name>
    <name type="ORF">P0264G11.2-2</name>
</gene>
<reference key="1">
    <citation type="journal article" date="2000" name="Chin. Sci. Bull.">
        <title>Molecular cloning of small GTP binding protein gene osRACD gene from rice.</title>
        <authorList>
            <person name="Mi Z."/>
            <person name="Wang S."/>
            <person name="Wu N."/>
        </authorList>
    </citation>
    <scope>NUCLEOTIDE SEQUENCE [GENOMIC DNA / MRNA] (ISOFORM 1)</scope>
</reference>
<reference key="2">
    <citation type="journal article" date="2005" name="Nature">
        <title>The map-based sequence of the rice genome.</title>
        <authorList>
            <consortium name="International rice genome sequencing project (IRGSP)"/>
        </authorList>
    </citation>
    <scope>NUCLEOTIDE SEQUENCE [LARGE SCALE GENOMIC DNA]</scope>
    <source>
        <strain>cv. Nipponbare</strain>
    </source>
</reference>
<reference key="3">
    <citation type="journal article" date="2013" name="Rice">
        <title>Improvement of the Oryza sativa Nipponbare reference genome using next generation sequence and optical map data.</title>
        <authorList>
            <person name="Kawahara Y."/>
            <person name="de la Bastide M."/>
            <person name="Hamilton J.P."/>
            <person name="Kanamori H."/>
            <person name="McCombie W.R."/>
            <person name="Ouyang S."/>
            <person name="Schwartz D.C."/>
            <person name="Tanaka T."/>
            <person name="Wu J."/>
            <person name="Zhou S."/>
            <person name="Childs K.L."/>
            <person name="Davidson R.M."/>
            <person name="Lin H."/>
            <person name="Quesada-Ocampo L."/>
            <person name="Vaillancourt B."/>
            <person name="Sakai H."/>
            <person name="Lee S.S."/>
            <person name="Kim J."/>
            <person name="Numa H."/>
            <person name="Itoh T."/>
            <person name="Buell C.R."/>
            <person name="Matsumoto T."/>
        </authorList>
    </citation>
    <scope>GENOME REANNOTATION</scope>
    <source>
        <strain>cv. Nipponbare</strain>
    </source>
</reference>
<reference key="4">
    <citation type="journal article" date="2005" name="PLoS Biol.">
        <title>The genomes of Oryza sativa: a history of duplications.</title>
        <authorList>
            <person name="Yu J."/>
            <person name="Wang J."/>
            <person name="Lin W."/>
            <person name="Li S."/>
            <person name="Li H."/>
            <person name="Zhou J."/>
            <person name="Ni P."/>
            <person name="Dong W."/>
            <person name="Hu S."/>
            <person name="Zeng C."/>
            <person name="Zhang J."/>
            <person name="Zhang Y."/>
            <person name="Li R."/>
            <person name="Xu Z."/>
            <person name="Li S."/>
            <person name="Li X."/>
            <person name="Zheng H."/>
            <person name="Cong L."/>
            <person name="Lin L."/>
            <person name="Yin J."/>
            <person name="Geng J."/>
            <person name="Li G."/>
            <person name="Shi J."/>
            <person name="Liu J."/>
            <person name="Lv H."/>
            <person name="Li J."/>
            <person name="Wang J."/>
            <person name="Deng Y."/>
            <person name="Ran L."/>
            <person name="Shi X."/>
            <person name="Wang X."/>
            <person name="Wu Q."/>
            <person name="Li C."/>
            <person name="Ren X."/>
            <person name="Wang J."/>
            <person name="Wang X."/>
            <person name="Li D."/>
            <person name="Liu D."/>
            <person name="Zhang X."/>
            <person name="Ji Z."/>
            <person name="Zhao W."/>
            <person name="Sun Y."/>
            <person name="Zhang Z."/>
            <person name="Bao J."/>
            <person name="Han Y."/>
            <person name="Dong L."/>
            <person name="Ji J."/>
            <person name="Chen P."/>
            <person name="Wu S."/>
            <person name="Liu J."/>
            <person name="Xiao Y."/>
            <person name="Bu D."/>
            <person name="Tan J."/>
            <person name="Yang L."/>
            <person name="Ye C."/>
            <person name="Zhang J."/>
            <person name="Xu J."/>
            <person name="Zhou Y."/>
            <person name="Yu Y."/>
            <person name="Zhang B."/>
            <person name="Zhuang S."/>
            <person name="Wei H."/>
            <person name="Liu B."/>
            <person name="Lei M."/>
            <person name="Yu H."/>
            <person name="Li Y."/>
            <person name="Xu H."/>
            <person name="Wei S."/>
            <person name="He X."/>
            <person name="Fang L."/>
            <person name="Zhang Z."/>
            <person name="Zhang Y."/>
            <person name="Huang X."/>
            <person name="Su Z."/>
            <person name="Tong W."/>
            <person name="Li J."/>
            <person name="Tong Z."/>
            <person name="Li S."/>
            <person name="Ye J."/>
            <person name="Wang L."/>
            <person name="Fang L."/>
            <person name="Lei T."/>
            <person name="Chen C.-S."/>
            <person name="Chen H.-C."/>
            <person name="Xu Z."/>
            <person name="Li H."/>
            <person name="Huang H."/>
            <person name="Zhang F."/>
            <person name="Xu H."/>
            <person name="Li N."/>
            <person name="Zhao C."/>
            <person name="Li S."/>
            <person name="Dong L."/>
            <person name="Huang Y."/>
            <person name="Li L."/>
            <person name="Xi Y."/>
            <person name="Qi Q."/>
            <person name="Li W."/>
            <person name="Zhang B."/>
            <person name="Hu W."/>
            <person name="Zhang Y."/>
            <person name="Tian X."/>
            <person name="Jiao Y."/>
            <person name="Liang X."/>
            <person name="Jin J."/>
            <person name="Gao L."/>
            <person name="Zheng W."/>
            <person name="Hao B."/>
            <person name="Liu S.-M."/>
            <person name="Wang W."/>
            <person name="Yuan L."/>
            <person name="Cao M."/>
            <person name="McDermott J."/>
            <person name="Samudrala R."/>
            <person name="Wang J."/>
            <person name="Wong G.K.-S."/>
            <person name="Yang H."/>
        </authorList>
    </citation>
    <scope>NUCLEOTIDE SEQUENCE [LARGE SCALE GENOMIC DNA]</scope>
    <source>
        <strain>cv. Nipponbare</strain>
    </source>
</reference>
<reference key="5">
    <citation type="journal article" date="2003" name="Science">
        <title>Collection, mapping, and annotation of over 28,000 cDNA clones from japonica rice.</title>
        <authorList>
            <consortium name="The rice full-length cDNA consortium"/>
        </authorList>
    </citation>
    <scope>NUCLEOTIDE SEQUENCE [LARGE SCALE MRNA] (ISOFORMS 1 AND 2)</scope>
    <source>
        <strain>cv. Nipponbare</strain>
    </source>
</reference>
<reference key="6">
    <citation type="submission" date="1999-12" db="EMBL/GenBank/DDBJ databases">
        <title>Rice small GTP binding protein.</title>
        <authorList>
            <person name="Wu N."/>
            <person name="Mi Z."/>
        </authorList>
    </citation>
    <scope>NUCLEOTIDE SEQUENCE [MRNA] OF 154-197</scope>
</reference>
<reference key="7">
    <citation type="journal article" date="2005" name="Plant Physiol.">
        <title>RNA silencing of single and multiple members in a gene family of rice.</title>
        <authorList>
            <person name="Miki D."/>
            <person name="Itoh R."/>
            <person name="Shimamoto K."/>
        </authorList>
    </citation>
    <scope>NOMENCLATURE</scope>
</reference>
<proteinExistence type="evidence at transcript level"/>
<evidence type="ECO:0000250" key="1"/>
<evidence type="ECO:0000255" key="2"/>
<evidence type="ECO:0000303" key="3">
    <source>
    </source>
</evidence>
<evidence type="ECO:0000305" key="4"/>
<evidence type="ECO:0000312" key="5">
    <source>
        <dbReference type="EMBL" id="EEE58123.1"/>
    </source>
</evidence>
<organism>
    <name type="scientific">Oryza sativa subsp. japonica</name>
    <name type="common">Rice</name>
    <dbReference type="NCBI Taxonomy" id="39947"/>
    <lineage>
        <taxon>Eukaryota</taxon>
        <taxon>Viridiplantae</taxon>
        <taxon>Streptophyta</taxon>
        <taxon>Embryophyta</taxon>
        <taxon>Tracheophyta</taxon>
        <taxon>Spermatophyta</taxon>
        <taxon>Magnoliopsida</taxon>
        <taxon>Liliopsida</taxon>
        <taxon>Poales</taxon>
        <taxon>Poaceae</taxon>
        <taxon>BOP clade</taxon>
        <taxon>Oryzoideae</taxon>
        <taxon>Oryzeae</taxon>
        <taxon>Oryzinae</taxon>
        <taxon>Oryza</taxon>
        <taxon>Oryza sativa</taxon>
    </lineage>
</organism>
<name>RAC5_ORYSJ</name>
<accession>Q6EP31</accession>
<accession>B7EDK5</accession>
<accession>Q9M628</accession>
<accession>Q9SLP0</accession>